<reference key="1">
    <citation type="journal article" date="1997" name="Nature">
        <title>Molecular basis of symbiosis between Rhizobium and legumes.</title>
        <authorList>
            <person name="Freiberg C.A."/>
            <person name="Fellay R."/>
            <person name="Bairoch A."/>
            <person name="Broughton W.J."/>
            <person name="Rosenthal A."/>
            <person name="Perret X."/>
        </authorList>
    </citation>
    <scope>NUCLEOTIDE SEQUENCE [LARGE SCALE GENOMIC DNA]</scope>
    <source>
        <strain>NBRC 101917 / NGR234</strain>
    </source>
</reference>
<reference key="2">
    <citation type="journal article" date="2009" name="Appl. Environ. Microbiol.">
        <title>Rhizobium sp. strain NGR234 possesses a remarkable number of secretion systems.</title>
        <authorList>
            <person name="Schmeisser C."/>
            <person name="Liesegang H."/>
            <person name="Krysciak D."/>
            <person name="Bakkou N."/>
            <person name="Le Quere A."/>
            <person name="Wollherr A."/>
            <person name="Heinemeyer I."/>
            <person name="Morgenstern B."/>
            <person name="Pommerening-Roeser A."/>
            <person name="Flores M."/>
            <person name="Palacios R."/>
            <person name="Brenner S."/>
            <person name="Gottschalk G."/>
            <person name="Schmitz R.A."/>
            <person name="Broughton W.J."/>
            <person name="Perret X."/>
            <person name="Strittmatter A.W."/>
            <person name="Streit W.R."/>
        </authorList>
    </citation>
    <scope>NUCLEOTIDE SEQUENCE [LARGE SCALE GENOMIC DNA]</scope>
    <source>
        <strain>NBRC 101917 / NGR234</strain>
    </source>
</reference>
<geneLocation type="plasmid">
    <name>sym pNGR234a</name>
</geneLocation>
<name>Y4PO_SINFN</name>
<keyword id="KW-0233">DNA recombination</keyword>
<keyword id="KW-0238">DNA-binding</keyword>
<keyword id="KW-0614">Plasmid</keyword>
<keyword id="KW-1185">Reference proteome</keyword>
<keyword id="KW-0814">Transposable element</keyword>
<keyword id="KW-0815">Transposition</keyword>
<evidence type="ECO:0000250" key="1"/>
<evidence type="ECO:0000305" key="2"/>
<protein>
    <recommendedName>
        <fullName>Probable transposase for insertion sequence element ISRM3-like</fullName>
    </recommendedName>
</protein>
<accession>P55620</accession>
<dbReference type="EMBL" id="U00090">
    <property type="protein sequence ID" value="AAB91825.1"/>
    <property type="molecule type" value="Genomic_DNA"/>
</dbReference>
<dbReference type="RefSeq" id="NP_444028.1">
    <property type="nucleotide sequence ID" value="NC_000914.2"/>
</dbReference>
<dbReference type="RefSeq" id="WP_010875231.1">
    <property type="nucleotide sequence ID" value="NC_000914.2"/>
</dbReference>
<dbReference type="SMR" id="P55620"/>
<dbReference type="KEGG" id="rhi:NGR_a01970"/>
<dbReference type="PATRIC" id="fig|394.7.peg.200"/>
<dbReference type="eggNOG" id="COG3328">
    <property type="taxonomic scope" value="Bacteria"/>
</dbReference>
<dbReference type="HOGENOM" id="CLU_036805_2_0_5"/>
<dbReference type="OrthoDB" id="9793302at2"/>
<dbReference type="Proteomes" id="UP000001054">
    <property type="component" value="Plasmid pNGR234a"/>
</dbReference>
<dbReference type="GO" id="GO:0003677">
    <property type="term" value="F:DNA binding"/>
    <property type="evidence" value="ECO:0007669"/>
    <property type="project" value="UniProtKB-KW"/>
</dbReference>
<dbReference type="GO" id="GO:0004803">
    <property type="term" value="F:transposase activity"/>
    <property type="evidence" value="ECO:0007669"/>
    <property type="project" value="InterPro"/>
</dbReference>
<dbReference type="GO" id="GO:0006313">
    <property type="term" value="P:DNA transposition"/>
    <property type="evidence" value="ECO:0007669"/>
    <property type="project" value="InterPro"/>
</dbReference>
<dbReference type="InterPro" id="IPR001207">
    <property type="entry name" value="Transposase_mutator"/>
</dbReference>
<dbReference type="NCBIfam" id="NF033543">
    <property type="entry name" value="transpos_IS256"/>
    <property type="match status" value="1"/>
</dbReference>
<dbReference type="PANTHER" id="PTHR33217:SF5">
    <property type="entry name" value="MUTATOR FAMILY TRANSPOSASE"/>
    <property type="match status" value="1"/>
</dbReference>
<dbReference type="PANTHER" id="PTHR33217">
    <property type="entry name" value="TRANSPOSASE FOR INSERTION SEQUENCE ELEMENT IS1081"/>
    <property type="match status" value="1"/>
</dbReference>
<dbReference type="Pfam" id="PF00872">
    <property type="entry name" value="Transposase_mut"/>
    <property type="match status" value="1"/>
</dbReference>
<dbReference type="PROSITE" id="PS01007">
    <property type="entry name" value="TRANSPOSASE_MUTATOR"/>
    <property type="match status" value="1"/>
</dbReference>
<comment type="function">
    <text evidence="1">Required for the transposition of the insertion element.</text>
</comment>
<comment type="similarity">
    <text evidence="2">Belongs to the transposase mutator family.</text>
</comment>
<organism>
    <name type="scientific">Sinorhizobium fredii (strain NBRC 101917 / NGR234)</name>
    <dbReference type="NCBI Taxonomy" id="394"/>
    <lineage>
        <taxon>Bacteria</taxon>
        <taxon>Pseudomonadati</taxon>
        <taxon>Pseudomonadota</taxon>
        <taxon>Alphaproteobacteria</taxon>
        <taxon>Hyphomicrobiales</taxon>
        <taxon>Rhizobiaceae</taxon>
        <taxon>Sinorhizobium/Ensifer group</taxon>
        <taxon>Sinorhizobium</taxon>
    </lineage>
</organism>
<proteinExistence type="inferred from homology"/>
<gene>
    <name type="ordered locus">NGR_a01970</name>
    <name type="ORF">y4pO</name>
</gene>
<feature type="chain" id="PRO_0000211357" description="Probable transposase for insertion sequence element ISRM3-like">
    <location>
        <begin position="1"/>
        <end position="400"/>
    </location>
</feature>
<sequence length="400" mass="45532">MAIEKELLDQLLAGRDPSEVFGKDGLLDDLKKALSERILNAELDEHLDVERSEGTAANRRNGSSKKTVLTGTSKMTLTIPRDRAGTFDPKLIARYQRRFPDFDDKIISMYARGMTVREIQGHLEDIYGIDVSPDLISAVTDQVLEAVGEWQNRPLELCYPLVFFDAIRVKIRDEGFVRNKAVYVALAVLADGTKEILGLWIEQTEGAKFWLRVMNELKSRGCQDILIAVVDGLKGFPDAITAVFPQTIVQTCIVHLIRHSLEFVSYKDRKPVVPALRAIYRARDAEAGLKALEAFEEGYWGQKYPAISQSWRRNWEHVVPFFAFPEGVRRIIYTTNAIEALNSKLRRAVRSRGHFPGDEAAMKLLYLVLNNAAEQWKRAPREWVEAKTQFAVIFGERFFN</sequence>